<dbReference type="EC" id="1.11.1.21" evidence="1"/>
<dbReference type="EMBL" id="CP000803">
    <property type="protein sequence ID" value="ABU62063.1"/>
    <property type="molecule type" value="Genomic_DNA"/>
</dbReference>
<dbReference type="RefSeq" id="WP_003016823.1">
    <property type="nucleotide sequence ID" value="NC_009749.1"/>
</dbReference>
<dbReference type="SMR" id="A7NDL0"/>
<dbReference type="KEGG" id="fta:FTA_1588"/>
<dbReference type="HOGENOM" id="CLU_025424_2_0_6"/>
<dbReference type="GO" id="GO:0005829">
    <property type="term" value="C:cytosol"/>
    <property type="evidence" value="ECO:0007669"/>
    <property type="project" value="TreeGrafter"/>
</dbReference>
<dbReference type="GO" id="GO:0004096">
    <property type="term" value="F:catalase activity"/>
    <property type="evidence" value="ECO:0007669"/>
    <property type="project" value="UniProtKB-UniRule"/>
</dbReference>
<dbReference type="GO" id="GO:0020037">
    <property type="term" value="F:heme binding"/>
    <property type="evidence" value="ECO:0007669"/>
    <property type="project" value="InterPro"/>
</dbReference>
<dbReference type="GO" id="GO:0046872">
    <property type="term" value="F:metal ion binding"/>
    <property type="evidence" value="ECO:0007669"/>
    <property type="project" value="UniProtKB-KW"/>
</dbReference>
<dbReference type="GO" id="GO:0070301">
    <property type="term" value="P:cellular response to hydrogen peroxide"/>
    <property type="evidence" value="ECO:0007669"/>
    <property type="project" value="TreeGrafter"/>
</dbReference>
<dbReference type="GO" id="GO:0042744">
    <property type="term" value="P:hydrogen peroxide catabolic process"/>
    <property type="evidence" value="ECO:0007669"/>
    <property type="project" value="UniProtKB-KW"/>
</dbReference>
<dbReference type="CDD" id="cd00649">
    <property type="entry name" value="catalase_peroxidase_1"/>
    <property type="match status" value="1"/>
</dbReference>
<dbReference type="CDD" id="cd08200">
    <property type="entry name" value="catalase_peroxidase_2"/>
    <property type="match status" value="1"/>
</dbReference>
<dbReference type="Gene3D" id="1.10.520.10">
    <property type="match status" value="2"/>
</dbReference>
<dbReference type="Gene3D" id="1.10.420.10">
    <property type="entry name" value="Peroxidase, domain 2"/>
    <property type="match status" value="2"/>
</dbReference>
<dbReference type="HAMAP" id="MF_01961">
    <property type="entry name" value="Catal_peroxid"/>
    <property type="match status" value="1"/>
</dbReference>
<dbReference type="InterPro" id="IPR000763">
    <property type="entry name" value="Catalase_peroxidase"/>
</dbReference>
<dbReference type="InterPro" id="IPR002016">
    <property type="entry name" value="Haem_peroxidase"/>
</dbReference>
<dbReference type="InterPro" id="IPR010255">
    <property type="entry name" value="Haem_peroxidase_sf"/>
</dbReference>
<dbReference type="InterPro" id="IPR019794">
    <property type="entry name" value="Peroxidases_AS"/>
</dbReference>
<dbReference type="InterPro" id="IPR019793">
    <property type="entry name" value="Peroxidases_heam-ligand_BS"/>
</dbReference>
<dbReference type="NCBIfam" id="TIGR00198">
    <property type="entry name" value="cat_per_HPI"/>
    <property type="match status" value="1"/>
</dbReference>
<dbReference type="NCBIfam" id="NF011635">
    <property type="entry name" value="PRK15061.1"/>
    <property type="match status" value="1"/>
</dbReference>
<dbReference type="PANTHER" id="PTHR30555:SF0">
    <property type="entry name" value="CATALASE-PEROXIDASE"/>
    <property type="match status" value="1"/>
</dbReference>
<dbReference type="PANTHER" id="PTHR30555">
    <property type="entry name" value="HYDROPEROXIDASE I, BIFUNCTIONAL CATALASE-PEROXIDASE"/>
    <property type="match status" value="1"/>
</dbReference>
<dbReference type="Pfam" id="PF00141">
    <property type="entry name" value="peroxidase"/>
    <property type="match status" value="2"/>
</dbReference>
<dbReference type="PRINTS" id="PR00460">
    <property type="entry name" value="BPEROXIDASE"/>
</dbReference>
<dbReference type="PRINTS" id="PR00458">
    <property type="entry name" value="PEROXIDASE"/>
</dbReference>
<dbReference type="SUPFAM" id="SSF48113">
    <property type="entry name" value="Heme-dependent peroxidases"/>
    <property type="match status" value="2"/>
</dbReference>
<dbReference type="PROSITE" id="PS00435">
    <property type="entry name" value="PEROXIDASE_1"/>
    <property type="match status" value="1"/>
</dbReference>
<dbReference type="PROSITE" id="PS00436">
    <property type="entry name" value="PEROXIDASE_2"/>
    <property type="match status" value="1"/>
</dbReference>
<dbReference type="PROSITE" id="PS50873">
    <property type="entry name" value="PEROXIDASE_4"/>
    <property type="match status" value="1"/>
</dbReference>
<reference key="1">
    <citation type="journal article" date="2009" name="PLoS ONE">
        <title>Complete genome sequence of Francisella tularensis subspecies holarctica FTNF002-00.</title>
        <authorList>
            <person name="Barabote R.D."/>
            <person name="Xie G."/>
            <person name="Brettin T.S."/>
            <person name="Hinrichs S.H."/>
            <person name="Fey P.D."/>
            <person name="Jay J.J."/>
            <person name="Engle J.L."/>
            <person name="Godbole S.D."/>
            <person name="Noronha J.M."/>
            <person name="Scheuermann R.H."/>
            <person name="Zhou L.W."/>
            <person name="Lion C."/>
            <person name="Dempsey M.P."/>
        </authorList>
    </citation>
    <scope>NUCLEOTIDE SEQUENCE [LARGE SCALE GENOMIC DNA]</scope>
    <source>
        <strain>FTNF002-00 / FTA</strain>
    </source>
</reference>
<comment type="function">
    <text evidence="1">Bifunctional enzyme with both catalase and broad-spectrum peroxidase activity.</text>
</comment>
<comment type="catalytic activity">
    <reaction evidence="1">
        <text>H2O2 + AH2 = A + 2 H2O</text>
        <dbReference type="Rhea" id="RHEA:30275"/>
        <dbReference type="ChEBI" id="CHEBI:13193"/>
        <dbReference type="ChEBI" id="CHEBI:15377"/>
        <dbReference type="ChEBI" id="CHEBI:16240"/>
        <dbReference type="ChEBI" id="CHEBI:17499"/>
        <dbReference type="EC" id="1.11.1.21"/>
    </reaction>
</comment>
<comment type="catalytic activity">
    <reaction evidence="1">
        <text>2 H2O2 = O2 + 2 H2O</text>
        <dbReference type="Rhea" id="RHEA:20309"/>
        <dbReference type="ChEBI" id="CHEBI:15377"/>
        <dbReference type="ChEBI" id="CHEBI:15379"/>
        <dbReference type="ChEBI" id="CHEBI:16240"/>
        <dbReference type="EC" id="1.11.1.21"/>
    </reaction>
</comment>
<comment type="cofactor">
    <cofactor evidence="1">
        <name>heme b</name>
        <dbReference type="ChEBI" id="CHEBI:60344"/>
    </cofactor>
    <text evidence="1">Binds 1 heme b (iron(II)-protoporphyrin IX) group per dimer.</text>
</comment>
<comment type="subunit">
    <text evidence="1">Homodimer or homotetramer.</text>
</comment>
<comment type="PTM">
    <text evidence="1">Formation of the three residue Trp-Tyr-Met cross-link is important for the catalase, but not the peroxidase activity of the enzyme.</text>
</comment>
<comment type="similarity">
    <text evidence="1">Belongs to the peroxidase family. Peroxidase/catalase subfamily.</text>
</comment>
<gene>
    <name evidence="1" type="primary">katG</name>
    <name type="ordered locus">FTA_1588</name>
</gene>
<feature type="signal peptide" evidence="1">
    <location>
        <begin position="1"/>
        <end position="23"/>
    </location>
</feature>
<feature type="chain" id="PRO_0000354789" description="Catalase-peroxidase">
    <location>
        <begin position="24"/>
        <end position="741"/>
    </location>
</feature>
<feature type="active site" description="Proton acceptor" evidence="1">
    <location>
        <position position="103"/>
    </location>
</feature>
<feature type="binding site" description="axial binding residue" evidence="1">
    <location>
        <position position="264"/>
    </location>
    <ligand>
        <name>heme b</name>
        <dbReference type="ChEBI" id="CHEBI:60344"/>
    </ligand>
    <ligandPart>
        <name>Fe</name>
        <dbReference type="ChEBI" id="CHEBI:18248"/>
    </ligandPart>
</feature>
<feature type="site" description="Transition state stabilizer" evidence="1">
    <location>
        <position position="99"/>
    </location>
</feature>
<feature type="cross-link" description="Tryptophyl-tyrosyl-methioninium (Trp-Tyr) (with M-249)" evidence="1">
    <location>
        <begin position="102"/>
        <end position="223"/>
    </location>
</feature>
<feature type="cross-link" description="Tryptophyl-tyrosyl-methioninium (Tyr-Met) (with W-102)" evidence="1">
    <location>
        <begin position="223"/>
        <end position="249"/>
    </location>
</feature>
<evidence type="ECO:0000255" key="1">
    <source>
        <dbReference type="HAMAP-Rule" id="MF_01961"/>
    </source>
</evidence>
<protein>
    <recommendedName>
        <fullName evidence="1">Catalase-peroxidase</fullName>
        <shortName evidence="1">CP</shortName>
        <ecNumber evidence="1">1.11.1.21</ecNumber>
    </recommendedName>
    <alternativeName>
        <fullName evidence="1">Peroxidase/catalase</fullName>
    </alternativeName>
</protein>
<sequence>MLKKIITALGMSGMLLASSNAIAEDTKTKNDNLSPQSVDLSPLRNLNKLDSPMDKDYNYHQAFKKLDTEQLKKDMQDLLTQSQDWWPADFGNYGPFFIRLSWHDAGTYRIYDGRGGANRGQQRFSPLNSWPDNVNLDKARQLLWPIKQKYGDAVSWSDLIVLAGTVSLESMGMKPIGFAFGREDDWQGDDTNWGLSPEEIMSSNVRDGKLAPAYAATQMGLIYVNPEGPDGKPDIKGAASEIRQAFRAMGMTDKETVALIAGGHTFGKTHGAVPEDKVKQAIGPAPDKAPIEQQGLGWHNSYGTGNGDDTMGSGLEGSWTSTPTFWNHDFLHNLYNLDWKKTLSPAGAHQWTPTNAKPENMVPDAHKLGVKHKPIMFTTDLALKEDDGFNKYTQEFYNNPEEFKEEFAKAWFKLTHRDMGPKSRYIGPWIPEQNFIWQDPVPAADYKQVSTQDIAQLEQDIINSGLTNQQLIKTAWDSASTYRKTDYRGGSNGARIALAPEKDWQMNEPAKLEVVLTKLKEIQTNFNNSKTDGTKVSLADLIVLGGNVGVEQAAKQAGYNIQMPFVPGRTDATQAQTDIESFNYLKTKSDGFINYTDGSISADKLPQTLVEKASMLDLNIPEMTVLVGGMRALDVNYDNSQEGVLTTTPGQLNNSFFVNLLDMSTQWKKSDKKDGEYIGIDRKTGKQKWTASPVDLIFGSNSELKAVAQVYAENGNEQKFVNDFAKAWHKVMMLGRFDVQQ</sequence>
<name>KATG_FRATF</name>
<keyword id="KW-0349">Heme</keyword>
<keyword id="KW-0376">Hydrogen peroxide</keyword>
<keyword id="KW-0408">Iron</keyword>
<keyword id="KW-0479">Metal-binding</keyword>
<keyword id="KW-0560">Oxidoreductase</keyword>
<keyword id="KW-0575">Peroxidase</keyword>
<keyword id="KW-0732">Signal</keyword>
<organism>
    <name type="scientific">Francisella tularensis subsp. holarctica (strain FTNF002-00 / FTA)</name>
    <dbReference type="NCBI Taxonomy" id="458234"/>
    <lineage>
        <taxon>Bacteria</taxon>
        <taxon>Pseudomonadati</taxon>
        <taxon>Pseudomonadota</taxon>
        <taxon>Gammaproteobacteria</taxon>
        <taxon>Thiotrichales</taxon>
        <taxon>Francisellaceae</taxon>
        <taxon>Francisella</taxon>
    </lineage>
</organism>
<proteinExistence type="inferred from homology"/>
<accession>A7NDL0</accession>